<accession>P86373</accession>
<feature type="chain" id="PRO_0000389542" description="Pregnancy-associated glycoprotein 73B">
    <location>
        <begin position="1"/>
        <end position="20" status="greater than"/>
    </location>
</feature>
<feature type="non-terminal residue" evidence="4">
    <location>
        <position position="20"/>
    </location>
</feature>
<proteinExistence type="evidence at protein level"/>
<protein>
    <recommendedName>
        <fullName evidence="4">Pregnancy-associated glycoprotein 73B</fullName>
        <ecNumber evidence="1">3.4.23.-</ecNumber>
    </recommendedName>
</protein>
<reference evidence="5" key="1">
    <citation type="journal article" date="2013" name="BMC Vet. Res.">
        <title>Purification of pregnancy-associated glycoproteins from late-pregnancy Bubalus bubalis placentas and development of a radioimmunoassay for pregnancy diagnosis in water buffalo females.</title>
        <authorList>
            <person name="Barbato O."/>
            <person name="Melo de Sousa N."/>
            <person name="Barile V.L."/>
            <person name="Canali C."/>
            <person name="Beckers J.F."/>
        </authorList>
    </citation>
    <scope>PROTEIN SEQUENCE</scope>
    <scope>TISSUE SPECIFICITY</scope>
    <scope>DEVELOPMENTAL STAGE</scope>
    <source>
        <tissue evidence="3">Fetal cotyledon</tissue>
    </source>
</reference>
<organism>
    <name type="scientific">Bubalus bubalis</name>
    <name type="common">Domestic water buffalo</name>
    <dbReference type="NCBI Taxonomy" id="89462"/>
    <lineage>
        <taxon>Eukaryota</taxon>
        <taxon>Metazoa</taxon>
        <taxon>Chordata</taxon>
        <taxon>Craniata</taxon>
        <taxon>Vertebrata</taxon>
        <taxon>Euteleostomi</taxon>
        <taxon>Mammalia</taxon>
        <taxon>Eutheria</taxon>
        <taxon>Laurasiatheria</taxon>
        <taxon>Artiodactyla</taxon>
        <taxon>Ruminantia</taxon>
        <taxon>Pecora</taxon>
        <taxon>Bovidae</taxon>
        <taxon>Bovinae</taxon>
        <taxon>Bubalus</taxon>
    </lineage>
</organism>
<evidence type="ECO:0000250" key="1">
    <source>
        <dbReference type="UniProtKB" id="P85322"/>
    </source>
</evidence>
<evidence type="ECO:0000255" key="2"/>
<evidence type="ECO:0000269" key="3">
    <source>
    </source>
</evidence>
<evidence type="ECO:0000303" key="4">
    <source>
    </source>
</evidence>
<evidence type="ECO:0000305" key="5"/>
<sequence>RGSXLTILPLRNKIDLFYVG</sequence>
<keyword id="KW-0064">Aspartyl protease</keyword>
<keyword id="KW-0903">Direct protein sequencing</keyword>
<keyword id="KW-0325">Glycoprotein</keyword>
<keyword id="KW-0378">Hydrolase</keyword>
<keyword id="KW-0645">Protease</keyword>
<keyword id="KW-0964">Secreted</keyword>
<dbReference type="EC" id="3.4.23.-" evidence="1"/>
<dbReference type="GO" id="GO:0005576">
    <property type="term" value="C:extracellular region"/>
    <property type="evidence" value="ECO:0007669"/>
    <property type="project" value="UniProtKB-SubCell"/>
</dbReference>
<dbReference type="GO" id="GO:0004190">
    <property type="term" value="F:aspartic-type endopeptidase activity"/>
    <property type="evidence" value="ECO:0007669"/>
    <property type="project" value="UniProtKB-KW"/>
</dbReference>
<dbReference type="GO" id="GO:0006508">
    <property type="term" value="P:proteolysis"/>
    <property type="evidence" value="ECO:0007669"/>
    <property type="project" value="UniProtKB-KW"/>
</dbReference>
<comment type="subcellular location">
    <subcellularLocation>
        <location evidence="1">Secreted</location>
        <location evidence="1">Extracellular space</location>
    </subcellularLocation>
</comment>
<comment type="tissue specificity">
    <text evidence="3">Expressed in chorionic epithelium (trophectoderm).</text>
</comment>
<comment type="developmental stage">
    <text evidence="3">Expressed during 8th month of pregnancy.</text>
</comment>
<comment type="PTM">
    <text evidence="1">N-glycosylated.</text>
</comment>
<comment type="similarity">
    <text evidence="2">Belongs to the peptidase A1 family.</text>
</comment>
<name>PA73B_BUBBU</name>